<accession>B2S0M7</accession>
<reference key="1">
    <citation type="submission" date="2004-12" db="EMBL/GenBank/DDBJ databases">
        <title>The genome sequence of Borrelia hermsii and Borrelia turicatae: comparative analysis of two agents of endemic N. America relapsing fever.</title>
        <authorList>
            <person name="Porcella S.F."/>
            <person name="Raffel S.J."/>
            <person name="Schrumpf M.E."/>
            <person name="Montgomery B."/>
            <person name="Smith T."/>
            <person name="Schwan T.G."/>
        </authorList>
    </citation>
    <scope>NUCLEOTIDE SEQUENCE [LARGE SCALE GENOMIC DNA]</scope>
    <source>
        <strain>HS1 / DAH</strain>
    </source>
</reference>
<feature type="chain" id="PRO_1000214183" description="Type III pantothenate kinase">
    <location>
        <begin position="1"/>
        <end position="265"/>
    </location>
</feature>
<feature type="active site" description="Proton acceptor" evidence="1">
    <location>
        <position position="116"/>
    </location>
</feature>
<feature type="binding site" evidence="1">
    <location>
        <begin position="17"/>
        <end position="24"/>
    </location>
    <ligand>
        <name>ATP</name>
        <dbReference type="ChEBI" id="CHEBI:30616"/>
    </ligand>
</feature>
<feature type="binding site" evidence="1">
    <location>
        <begin position="114"/>
        <end position="117"/>
    </location>
    <ligand>
        <name>substrate</name>
    </ligand>
</feature>
<feature type="binding site" evidence="1">
    <location>
        <position position="137"/>
    </location>
    <ligand>
        <name>K(+)</name>
        <dbReference type="ChEBI" id="CHEBI:29103"/>
    </ligand>
</feature>
<feature type="binding site" evidence="1">
    <location>
        <position position="140"/>
    </location>
    <ligand>
        <name>ATP</name>
        <dbReference type="ChEBI" id="CHEBI:30616"/>
    </ligand>
</feature>
<feature type="binding site" evidence="1">
    <location>
        <position position="192"/>
    </location>
    <ligand>
        <name>substrate</name>
    </ligand>
</feature>
<proteinExistence type="inferred from homology"/>
<keyword id="KW-0067">ATP-binding</keyword>
<keyword id="KW-0173">Coenzyme A biosynthesis</keyword>
<keyword id="KW-0963">Cytoplasm</keyword>
<keyword id="KW-0418">Kinase</keyword>
<keyword id="KW-0479">Metal-binding</keyword>
<keyword id="KW-0547">Nucleotide-binding</keyword>
<keyword id="KW-0630">Potassium</keyword>
<keyword id="KW-0808">Transferase</keyword>
<dbReference type="EC" id="2.7.1.33" evidence="1"/>
<dbReference type="EMBL" id="CP000048">
    <property type="protein sequence ID" value="AAX17033.1"/>
    <property type="molecule type" value="Genomic_DNA"/>
</dbReference>
<dbReference type="SMR" id="B2S0M7"/>
<dbReference type="KEGG" id="bhr:BH0527"/>
<dbReference type="HOGENOM" id="CLU_066627_1_1_12"/>
<dbReference type="UniPathway" id="UPA00241">
    <property type="reaction ID" value="UER00352"/>
</dbReference>
<dbReference type="Proteomes" id="UP000008834">
    <property type="component" value="Chromosome"/>
</dbReference>
<dbReference type="GO" id="GO:0005737">
    <property type="term" value="C:cytoplasm"/>
    <property type="evidence" value="ECO:0007669"/>
    <property type="project" value="UniProtKB-SubCell"/>
</dbReference>
<dbReference type="GO" id="GO:0005524">
    <property type="term" value="F:ATP binding"/>
    <property type="evidence" value="ECO:0007669"/>
    <property type="project" value="UniProtKB-UniRule"/>
</dbReference>
<dbReference type="GO" id="GO:0046872">
    <property type="term" value="F:metal ion binding"/>
    <property type="evidence" value="ECO:0007669"/>
    <property type="project" value="UniProtKB-KW"/>
</dbReference>
<dbReference type="GO" id="GO:0004594">
    <property type="term" value="F:pantothenate kinase activity"/>
    <property type="evidence" value="ECO:0007669"/>
    <property type="project" value="UniProtKB-UniRule"/>
</dbReference>
<dbReference type="GO" id="GO:0015937">
    <property type="term" value="P:coenzyme A biosynthetic process"/>
    <property type="evidence" value="ECO:0007669"/>
    <property type="project" value="UniProtKB-UniRule"/>
</dbReference>
<dbReference type="CDD" id="cd24015">
    <property type="entry name" value="ASKHA_NBD_PanK-III"/>
    <property type="match status" value="1"/>
</dbReference>
<dbReference type="Gene3D" id="3.30.420.40">
    <property type="match status" value="2"/>
</dbReference>
<dbReference type="HAMAP" id="MF_01274">
    <property type="entry name" value="Pantothen_kinase_3"/>
    <property type="match status" value="1"/>
</dbReference>
<dbReference type="InterPro" id="IPR043129">
    <property type="entry name" value="ATPase_NBD"/>
</dbReference>
<dbReference type="InterPro" id="IPR004619">
    <property type="entry name" value="Type_III_PanK"/>
</dbReference>
<dbReference type="NCBIfam" id="TIGR00671">
    <property type="entry name" value="baf"/>
    <property type="match status" value="1"/>
</dbReference>
<dbReference type="NCBIfam" id="NF009863">
    <property type="entry name" value="PRK13326.1"/>
    <property type="match status" value="1"/>
</dbReference>
<dbReference type="PANTHER" id="PTHR34265">
    <property type="entry name" value="TYPE III PANTOTHENATE KINASE"/>
    <property type="match status" value="1"/>
</dbReference>
<dbReference type="PANTHER" id="PTHR34265:SF1">
    <property type="entry name" value="TYPE III PANTOTHENATE KINASE"/>
    <property type="match status" value="1"/>
</dbReference>
<dbReference type="Pfam" id="PF03309">
    <property type="entry name" value="Pan_kinase"/>
    <property type="match status" value="1"/>
</dbReference>
<dbReference type="SUPFAM" id="SSF53067">
    <property type="entry name" value="Actin-like ATPase domain"/>
    <property type="match status" value="2"/>
</dbReference>
<sequence>MRILMNKFVGAVQLIIDIGNTSISFALYRLDKMQIYCKLGTKRDLSFKELYKFLKVKFDYKVDQVFVSSVVPVIDTVLINAIVSLYKVNPLFIRFDLSYDLSFNLYNNNRFVLGSDVFANLVGAIEYYNINDALVVDLGTACTIFAISRREGILGGLINGGPFTDLNALIQNAYLLNDFNLAVPKKLLGLSTIDSVNSGVIYQYKYLIEGVYHELRHNYDKEFRLIITGGNSYLVLPLISVDFIANLYLTLEGIRILGNAFKGDY</sequence>
<evidence type="ECO:0000255" key="1">
    <source>
        <dbReference type="HAMAP-Rule" id="MF_01274"/>
    </source>
</evidence>
<comment type="function">
    <text evidence="1">Catalyzes the phosphorylation of pantothenate (Pan), the first step in CoA biosynthesis.</text>
</comment>
<comment type="catalytic activity">
    <reaction evidence="1">
        <text>(R)-pantothenate + ATP = (R)-4'-phosphopantothenate + ADP + H(+)</text>
        <dbReference type="Rhea" id="RHEA:16373"/>
        <dbReference type="ChEBI" id="CHEBI:10986"/>
        <dbReference type="ChEBI" id="CHEBI:15378"/>
        <dbReference type="ChEBI" id="CHEBI:29032"/>
        <dbReference type="ChEBI" id="CHEBI:30616"/>
        <dbReference type="ChEBI" id="CHEBI:456216"/>
        <dbReference type="EC" id="2.7.1.33"/>
    </reaction>
</comment>
<comment type="cofactor">
    <cofactor evidence="1">
        <name>NH4(+)</name>
        <dbReference type="ChEBI" id="CHEBI:28938"/>
    </cofactor>
    <cofactor evidence="1">
        <name>K(+)</name>
        <dbReference type="ChEBI" id="CHEBI:29103"/>
    </cofactor>
    <text evidence="1">A monovalent cation. Ammonium or potassium.</text>
</comment>
<comment type="pathway">
    <text evidence="1">Cofactor biosynthesis; coenzyme A biosynthesis; CoA from (R)-pantothenate: step 1/5.</text>
</comment>
<comment type="subunit">
    <text evidence="1">Homodimer.</text>
</comment>
<comment type="subcellular location">
    <subcellularLocation>
        <location evidence="1">Cytoplasm</location>
    </subcellularLocation>
</comment>
<comment type="similarity">
    <text evidence="1">Belongs to the type III pantothenate kinase family.</text>
</comment>
<gene>
    <name evidence="1" type="primary">coaX</name>
    <name type="ordered locus">BH0527</name>
</gene>
<name>COAX_BORHD</name>
<protein>
    <recommendedName>
        <fullName evidence="1">Type III pantothenate kinase</fullName>
        <ecNumber evidence="1">2.7.1.33</ecNumber>
    </recommendedName>
    <alternativeName>
        <fullName evidence="1">PanK-III</fullName>
    </alternativeName>
    <alternativeName>
        <fullName evidence="1">Pantothenic acid kinase</fullName>
    </alternativeName>
</protein>
<organism>
    <name type="scientific">Borrelia hermsii (strain HS1 / DAH)</name>
    <dbReference type="NCBI Taxonomy" id="314723"/>
    <lineage>
        <taxon>Bacteria</taxon>
        <taxon>Pseudomonadati</taxon>
        <taxon>Spirochaetota</taxon>
        <taxon>Spirochaetia</taxon>
        <taxon>Spirochaetales</taxon>
        <taxon>Borreliaceae</taxon>
        <taxon>Borrelia</taxon>
    </lineage>
</organism>